<reference key="1">
    <citation type="journal article" date="2006" name="Nat. Biotechnol.">
        <title>Complete genome sequence of the entomopathogenic and metabolically versatile soil bacterium Pseudomonas entomophila.</title>
        <authorList>
            <person name="Vodovar N."/>
            <person name="Vallenet D."/>
            <person name="Cruveiller S."/>
            <person name="Rouy Z."/>
            <person name="Barbe V."/>
            <person name="Acosta C."/>
            <person name="Cattolico L."/>
            <person name="Jubin C."/>
            <person name="Lajus A."/>
            <person name="Segurens B."/>
            <person name="Vacherie B."/>
            <person name="Wincker P."/>
            <person name="Weissenbach J."/>
            <person name="Lemaitre B."/>
            <person name="Medigue C."/>
            <person name="Boccard F."/>
        </authorList>
    </citation>
    <scope>NUCLEOTIDE SEQUENCE [LARGE SCALE GENOMIC DNA]</scope>
    <source>
        <strain>L48</strain>
    </source>
</reference>
<proteinExistence type="inferred from homology"/>
<sequence length="224" mass="23443">MTQDQLKQAVAQAAVDLILPKLDEKSVVGVGTGSTANFFIDALAQHKTAFDGAVASSEATAQRLKGHGIPVYELNSVSELEFYVDGADESDAHLNLIKGGGAALTREKIVAAVAKTFICIADASKLVPVLGAFPLPVEVIPMARSHVARQLVKLGGDPVYREGVVTDNGNVILDVHNLQITNPVELESQINAIVGVVTNGLFAARPADVLLLGTAEGVKTLKAE</sequence>
<comment type="function">
    <text evidence="1">Catalyzes the reversible conversion of ribose-5-phosphate to ribulose 5-phosphate.</text>
</comment>
<comment type="catalytic activity">
    <reaction evidence="1">
        <text>aldehydo-D-ribose 5-phosphate = D-ribulose 5-phosphate</text>
        <dbReference type="Rhea" id="RHEA:14657"/>
        <dbReference type="ChEBI" id="CHEBI:58121"/>
        <dbReference type="ChEBI" id="CHEBI:58273"/>
        <dbReference type="EC" id="5.3.1.6"/>
    </reaction>
</comment>
<comment type="pathway">
    <text evidence="1">Carbohydrate degradation; pentose phosphate pathway; D-ribose 5-phosphate from D-ribulose 5-phosphate (non-oxidative stage): step 1/1.</text>
</comment>
<comment type="subunit">
    <text evidence="1">Homodimer.</text>
</comment>
<comment type="similarity">
    <text evidence="1">Belongs to the ribose 5-phosphate isomerase family.</text>
</comment>
<protein>
    <recommendedName>
        <fullName evidence="1">Ribose-5-phosphate isomerase A</fullName>
        <ecNumber evidence="1">5.3.1.6</ecNumber>
    </recommendedName>
    <alternativeName>
        <fullName evidence="1">Phosphoriboisomerase A</fullName>
        <shortName evidence="1">PRI</shortName>
    </alternativeName>
</protein>
<organism>
    <name type="scientific">Pseudomonas entomophila (strain L48)</name>
    <dbReference type="NCBI Taxonomy" id="384676"/>
    <lineage>
        <taxon>Bacteria</taxon>
        <taxon>Pseudomonadati</taxon>
        <taxon>Pseudomonadota</taxon>
        <taxon>Gammaproteobacteria</taxon>
        <taxon>Pseudomonadales</taxon>
        <taxon>Pseudomonadaceae</taxon>
        <taxon>Pseudomonas</taxon>
    </lineage>
</organism>
<gene>
    <name evidence="1" type="primary">rpiA</name>
    <name type="ordered locus">PSEEN5243</name>
</gene>
<accession>Q1I3B8</accession>
<dbReference type="EC" id="5.3.1.6" evidence="1"/>
<dbReference type="EMBL" id="CT573326">
    <property type="protein sequence ID" value="CAK17868.1"/>
    <property type="molecule type" value="Genomic_DNA"/>
</dbReference>
<dbReference type="RefSeq" id="WP_011536226.1">
    <property type="nucleotide sequence ID" value="NC_008027.1"/>
</dbReference>
<dbReference type="SMR" id="Q1I3B8"/>
<dbReference type="STRING" id="384676.PSEEN5243"/>
<dbReference type="GeneID" id="58766099"/>
<dbReference type="KEGG" id="pen:PSEEN5243"/>
<dbReference type="eggNOG" id="COG0120">
    <property type="taxonomic scope" value="Bacteria"/>
</dbReference>
<dbReference type="HOGENOM" id="CLU_056590_1_1_6"/>
<dbReference type="OrthoDB" id="5870696at2"/>
<dbReference type="UniPathway" id="UPA00115">
    <property type="reaction ID" value="UER00412"/>
</dbReference>
<dbReference type="Proteomes" id="UP000000658">
    <property type="component" value="Chromosome"/>
</dbReference>
<dbReference type="GO" id="GO:0005829">
    <property type="term" value="C:cytosol"/>
    <property type="evidence" value="ECO:0007669"/>
    <property type="project" value="TreeGrafter"/>
</dbReference>
<dbReference type="GO" id="GO:0004751">
    <property type="term" value="F:ribose-5-phosphate isomerase activity"/>
    <property type="evidence" value="ECO:0007669"/>
    <property type="project" value="UniProtKB-UniRule"/>
</dbReference>
<dbReference type="GO" id="GO:0006014">
    <property type="term" value="P:D-ribose metabolic process"/>
    <property type="evidence" value="ECO:0007669"/>
    <property type="project" value="TreeGrafter"/>
</dbReference>
<dbReference type="GO" id="GO:0009052">
    <property type="term" value="P:pentose-phosphate shunt, non-oxidative branch"/>
    <property type="evidence" value="ECO:0007669"/>
    <property type="project" value="UniProtKB-UniRule"/>
</dbReference>
<dbReference type="CDD" id="cd01398">
    <property type="entry name" value="RPI_A"/>
    <property type="match status" value="1"/>
</dbReference>
<dbReference type="FunFam" id="3.30.70.260:FF:000004">
    <property type="entry name" value="Ribose-5-phosphate isomerase A"/>
    <property type="match status" value="1"/>
</dbReference>
<dbReference type="FunFam" id="3.40.50.1360:FF:000001">
    <property type="entry name" value="Ribose-5-phosphate isomerase A"/>
    <property type="match status" value="1"/>
</dbReference>
<dbReference type="Gene3D" id="3.30.70.260">
    <property type="match status" value="1"/>
</dbReference>
<dbReference type="Gene3D" id="3.40.50.1360">
    <property type="match status" value="1"/>
</dbReference>
<dbReference type="HAMAP" id="MF_00170">
    <property type="entry name" value="Rib_5P_isom_A"/>
    <property type="match status" value="1"/>
</dbReference>
<dbReference type="InterPro" id="IPR037171">
    <property type="entry name" value="NagB/RpiA_transferase-like"/>
</dbReference>
<dbReference type="InterPro" id="IPR020672">
    <property type="entry name" value="Ribose5P_isomerase_typA_subgr"/>
</dbReference>
<dbReference type="InterPro" id="IPR004788">
    <property type="entry name" value="Ribose5P_isomerase_type_A"/>
</dbReference>
<dbReference type="NCBIfam" id="NF001924">
    <property type="entry name" value="PRK00702.1"/>
    <property type="match status" value="1"/>
</dbReference>
<dbReference type="NCBIfam" id="TIGR00021">
    <property type="entry name" value="rpiA"/>
    <property type="match status" value="1"/>
</dbReference>
<dbReference type="PANTHER" id="PTHR11934">
    <property type="entry name" value="RIBOSE-5-PHOSPHATE ISOMERASE"/>
    <property type="match status" value="1"/>
</dbReference>
<dbReference type="PANTHER" id="PTHR11934:SF0">
    <property type="entry name" value="RIBOSE-5-PHOSPHATE ISOMERASE"/>
    <property type="match status" value="1"/>
</dbReference>
<dbReference type="Pfam" id="PF06026">
    <property type="entry name" value="Rib_5-P_isom_A"/>
    <property type="match status" value="1"/>
</dbReference>
<dbReference type="SUPFAM" id="SSF75445">
    <property type="entry name" value="D-ribose-5-phosphate isomerase (RpiA), lid domain"/>
    <property type="match status" value="1"/>
</dbReference>
<dbReference type="SUPFAM" id="SSF100950">
    <property type="entry name" value="NagB/RpiA/CoA transferase-like"/>
    <property type="match status" value="1"/>
</dbReference>
<evidence type="ECO:0000255" key="1">
    <source>
        <dbReference type="HAMAP-Rule" id="MF_00170"/>
    </source>
</evidence>
<name>RPIA_PSEE4</name>
<keyword id="KW-0413">Isomerase</keyword>
<feature type="chain" id="PRO_1000016964" description="Ribose-5-phosphate isomerase A">
    <location>
        <begin position="1"/>
        <end position="224"/>
    </location>
</feature>
<feature type="active site" description="Proton acceptor" evidence="1">
    <location>
        <position position="107"/>
    </location>
</feature>
<feature type="binding site" evidence="1">
    <location>
        <begin position="32"/>
        <end position="35"/>
    </location>
    <ligand>
        <name>substrate</name>
    </ligand>
</feature>
<feature type="binding site" evidence="1">
    <location>
        <begin position="85"/>
        <end position="88"/>
    </location>
    <ligand>
        <name>substrate</name>
    </ligand>
</feature>
<feature type="binding site" evidence="1">
    <location>
        <begin position="98"/>
        <end position="101"/>
    </location>
    <ligand>
        <name>substrate</name>
    </ligand>
</feature>
<feature type="binding site" evidence="1">
    <location>
        <position position="125"/>
    </location>
    <ligand>
        <name>substrate</name>
    </ligand>
</feature>